<feature type="signal peptide" evidence="2">
    <location>
        <begin position="1"/>
        <end position="21"/>
    </location>
</feature>
<feature type="propeptide" id="PRO_0000409973" evidence="1">
    <location>
        <begin position="22"/>
        <end position="44"/>
    </location>
</feature>
<feature type="peptide" id="PRO_0000409974" description="Conotoxin Bu24">
    <location>
        <begin position="45"/>
        <end position="70"/>
    </location>
</feature>
<feature type="modified residue" description="Asparagine amide" evidence="1">
    <location>
        <position position="70"/>
    </location>
</feature>
<sequence>MGMRMMVTVFLLVVLATTVVSLRSNRASDGRRGIVNKLNDLVPKYWTECCGRIGPHCSRCICPEVACPKNG</sequence>
<organism>
    <name type="scientific">Conus bullatus</name>
    <name type="common">Bubble cone</name>
    <dbReference type="NCBI Taxonomy" id="89438"/>
    <lineage>
        <taxon>Eukaryota</taxon>
        <taxon>Metazoa</taxon>
        <taxon>Spiralia</taxon>
        <taxon>Lophotrochozoa</taxon>
        <taxon>Mollusca</taxon>
        <taxon>Gastropoda</taxon>
        <taxon>Caenogastropoda</taxon>
        <taxon>Neogastropoda</taxon>
        <taxon>Conoidea</taxon>
        <taxon>Conidae</taxon>
        <taxon>Conus</taxon>
        <taxon>Textilia</taxon>
    </lineage>
</organism>
<accession>P0CY79</accession>
<dbReference type="SMR" id="P0CY79"/>
<dbReference type="GO" id="GO:0005576">
    <property type="term" value="C:extracellular region"/>
    <property type="evidence" value="ECO:0007669"/>
    <property type="project" value="UniProtKB-SubCell"/>
</dbReference>
<dbReference type="GO" id="GO:0030550">
    <property type="term" value="F:acetylcholine receptor inhibitor activity"/>
    <property type="evidence" value="ECO:0007669"/>
    <property type="project" value="InterPro"/>
</dbReference>
<dbReference type="GO" id="GO:0099106">
    <property type="term" value="F:ion channel regulator activity"/>
    <property type="evidence" value="ECO:0007669"/>
    <property type="project" value="UniProtKB-KW"/>
</dbReference>
<dbReference type="GO" id="GO:0090729">
    <property type="term" value="F:toxin activity"/>
    <property type="evidence" value="ECO:0007669"/>
    <property type="project" value="UniProtKB-KW"/>
</dbReference>
<dbReference type="InterPro" id="IPR009958">
    <property type="entry name" value="Conotoxin_a-typ"/>
</dbReference>
<dbReference type="Pfam" id="PF07365">
    <property type="entry name" value="Toxin_8"/>
    <property type="match status" value="1"/>
</dbReference>
<protein>
    <recommendedName>
        <fullName>Conotoxin Bu24</fullName>
    </recommendedName>
</protein>
<keyword id="KW-0027">Amidation</keyword>
<keyword id="KW-1015">Disulfide bond</keyword>
<keyword id="KW-0872">Ion channel impairing toxin</keyword>
<keyword id="KW-0528">Neurotoxin</keyword>
<keyword id="KW-0964">Secreted</keyword>
<keyword id="KW-0732">Signal</keyword>
<keyword id="KW-0800">Toxin</keyword>
<comment type="subcellular location">
    <subcellularLocation>
        <location evidence="1">Secreted</location>
    </subcellularLocation>
</comment>
<comment type="tissue specificity">
    <text>Expressed by the venom duct.</text>
</comment>
<comment type="domain">
    <text>The cysteine framework is IV (CC-C-C-C-C).</text>
</comment>
<comment type="PTM">
    <text evidence="1">Contains 3 disulfide bonds (By similarity). They are not indicated here, since framework IV presents two different connectivities (I-V, II-III, IV-VI and I-III, II-V, IV-VI).</text>
</comment>
<comment type="similarity">
    <text evidence="3">Belongs to the conotoxin A superfamily.</text>
</comment>
<name>CA424_CONBU</name>
<reference key="1">
    <citation type="journal article" date="2011" name="BMC Genomics">
        <title>Characterization of the Conus bullatus genome and its venom-duct transcriptome.</title>
        <authorList>
            <person name="Hu H."/>
            <person name="Bandyopadhyay P.K."/>
            <person name="Olivera B.M."/>
            <person name="Yandell M."/>
        </authorList>
    </citation>
    <scope>NUCLEOTIDE SEQUENCE [MRNA]</scope>
    <source>
        <tissue>Venom duct</tissue>
    </source>
</reference>
<evidence type="ECO:0000250" key="1"/>
<evidence type="ECO:0000255" key="2"/>
<evidence type="ECO:0000305" key="3"/>
<proteinExistence type="evidence at transcript level"/>